<name>GPRK2_DROME</name>
<feature type="chain" id="PRO_0000085966" description="G protein-coupled receptor kinase 2">
    <location>
        <begin position="1"/>
        <end position="714"/>
    </location>
</feature>
<feature type="domain" description="RGS 1" evidence="3">
    <location>
        <begin position="53"/>
        <end position="174"/>
    </location>
</feature>
<feature type="domain" description="RGS 2" evidence="3">
    <location>
        <begin position="177"/>
        <end position="294"/>
    </location>
</feature>
<feature type="domain" description="Protein kinase" evidence="2">
    <location>
        <begin position="309"/>
        <end position="574"/>
    </location>
</feature>
<feature type="domain" description="AGC-kinase C-terminal" evidence="4">
    <location>
        <begin position="577"/>
        <end position="642"/>
    </location>
</feature>
<feature type="region of interest" description="N-terminal">
    <location>
        <begin position="1"/>
        <end position="308"/>
    </location>
</feature>
<feature type="region of interest" description="Disordered" evidence="5">
    <location>
        <begin position="141"/>
        <end position="229"/>
    </location>
</feature>
<feature type="region of interest" description="Disordered" evidence="5">
    <location>
        <begin position="667"/>
        <end position="714"/>
    </location>
</feature>
<feature type="compositionally biased region" description="Low complexity" evidence="5">
    <location>
        <begin position="154"/>
        <end position="175"/>
    </location>
</feature>
<feature type="compositionally biased region" description="Basic and acidic residues" evidence="5">
    <location>
        <begin position="176"/>
        <end position="190"/>
    </location>
</feature>
<feature type="compositionally biased region" description="Basic and acidic residues" evidence="5">
    <location>
        <begin position="199"/>
        <end position="220"/>
    </location>
</feature>
<feature type="compositionally biased region" description="Low complexity" evidence="5">
    <location>
        <begin position="698"/>
        <end position="714"/>
    </location>
</feature>
<feature type="active site" description="Proton acceptor" evidence="2">
    <location>
        <position position="435"/>
    </location>
</feature>
<feature type="binding site" evidence="2">
    <location>
        <begin position="315"/>
        <end position="323"/>
    </location>
    <ligand>
        <name>ATP</name>
        <dbReference type="ChEBI" id="CHEBI:30616"/>
    </ligand>
</feature>
<feature type="binding site" evidence="2">
    <location>
        <position position="338"/>
    </location>
    <ligand>
        <name>ATP</name>
        <dbReference type="ChEBI" id="CHEBI:30616"/>
    </ligand>
</feature>
<feature type="modified residue" description="Phosphoserine" evidence="6">
    <location>
        <position position="612"/>
    </location>
</feature>
<feature type="modified residue" description="Phosphothreonine" evidence="6">
    <location>
        <position position="613"/>
    </location>
</feature>
<feature type="sequence conflict" description="In Ref. 1; AAB61467." evidence="9" ref="1">
    <original>F</original>
    <variation>C</variation>
    <location>
        <position position="70"/>
    </location>
</feature>
<feature type="sequence conflict" description="In Ref. 6; AAA28589." evidence="9" ref="6">
    <original>S</original>
    <variation>N</variation>
    <location>
        <position position="206"/>
    </location>
</feature>
<feature type="sequence conflict" description="In Ref. 1; AAB61467 and 6; AAA28589." evidence="9" ref="1 6">
    <original>P</original>
    <variation>H</variation>
    <location>
        <position position="232"/>
    </location>
</feature>
<comment type="function">
    <text evidence="1 7">Specifically phosphorylates the activated forms of G protein-coupled receptors (By similarity). Required during oogenesis and embryogenesis; component of a signaling pathway that functions during egg chamber maturation.</text>
</comment>
<comment type="catalytic activity">
    <reaction>
        <text>[G-protein-coupled receptor] + ATP = [G-protein-coupled receptor]-phosphate + ADP + H(+)</text>
        <dbReference type="Rhea" id="RHEA:12008"/>
        <dbReference type="Rhea" id="RHEA-COMP:11260"/>
        <dbReference type="Rhea" id="RHEA-COMP:11261"/>
        <dbReference type="ChEBI" id="CHEBI:15378"/>
        <dbReference type="ChEBI" id="CHEBI:30616"/>
        <dbReference type="ChEBI" id="CHEBI:43176"/>
        <dbReference type="ChEBI" id="CHEBI:68546"/>
        <dbReference type="ChEBI" id="CHEBI:456216"/>
        <dbReference type="EC" id="2.7.11.16"/>
    </reaction>
</comment>
<comment type="subcellular location">
    <subcellularLocation>
        <location evidence="7">Membrane</location>
    </subcellularLocation>
    <text>Associated with nurse cell and oocyte plasma membranes during much of oogenesis.</text>
</comment>
<comment type="tissue specificity">
    <text evidence="7">Expressed in all larval tissues and in adult ovaries. Larval CNS staining is localized to axons projecting to the optic lobes and the mushroom bodies, in the longitudinal connectives, and in cell bodies and nerves of the ring gland corpus allatum. Adult CNS staining is detectable only in cell bodies and processes associated with the ellipsoid body of the central complex and portions of the mushroom bodies. In the wing disk, expression is confined to a stripe that parallels the anterior/posterior boundary of the wing blade and the hinge region, and weak expression in the prospective notum.</text>
</comment>
<comment type="developmental stage">
    <text evidence="7">Expressed both maternally and zygotically.</text>
</comment>
<comment type="disruption phenotype">
    <text evidence="7">Adult females show severely reduced number of egg chambers and the small germarium in ovarioles. The rare eggs that become fertilized display gross defects in embryogenesis exhibiting fusion of adjacent segments and holes in the dorsal and ventral cuticle.</text>
</comment>
<comment type="similarity">
    <text evidence="9">Belongs to the protein kinase superfamily. AGC Ser/Thr protein kinase family. GPRK subfamily.</text>
</comment>
<comment type="sequence caution" evidence="9">
    <conflict type="frameshift">
        <sequence resource="EMBL-CDS" id="AAA28589"/>
    </conflict>
</comment>
<comment type="sequence caution" evidence="9">
    <conflict type="erroneous initiation">
        <sequence resource="EMBL-CDS" id="AAK93373"/>
    </conflict>
</comment>
<keyword id="KW-0067">ATP-binding</keyword>
<keyword id="KW-0217">Developmental protein</keyword>
<keyword id="KW-0221">Differentiation</keyword>
<keyword id="KW-0418">Kinase</keyword>
<keyword id="KW-0472">Membrane</keyword>
<keyword id="KW-0547">Nucleotide-binding</keyword>
<keyword id="KW-0896">Oogenesis</keyword>
<keyword id="KW-0597">Phosphoprotein</keyword>
<keyword id="KW-1185">Reference proteome</keyword>
<keyword id="KW-0677">Repeat</keyword>
<keyword id="KW-0723">Serine/threonine-protein kinase</keyword>
<keyword id="KW-0808">Transferase</keyword>
<organism>
    <name type="scientific">Drosophila melanogaster</name>
    <name type="common">Fruit fly</name>
    <dbReference type="NCBI Taxonomy" id="7227"/>
    <lineage>
        <taxon>Eukaryota</taxon>
        <taxon>Metazoa</taxon>
        <taxon>Ecdysozoa</taxon>
        <taxon>Arthropoda</taxon>
        <taxon>Hexapoda</taxon>
        <taxon>Insecta</taxon>
        <taxon>Pterygota</taxon>
        <taxon>Neoptera</taxon>
        <taxon>Endopterygota</taxon>
        <taxon>Diptera</taxon>
        <taxon>Brachycera</taxon>
        <taxon>Muscomorpha</taxon>
        <taxon>Ephydroidea</taxon>
        <taxon>Drosophilidae</taxon>
        <taxon>Drosophila</taxon>
        <taxon>Sophophora</taxon>
    </lineage>
</organism>
<evidence type="ECO:0000250" key="1"/>
<evidence type="ECO:0000255" key="2">
    <source>
        <dbReference type="PROSITE-ProRule" id="PRU00159"/>
    </source>
</evidence>
<evidence type="ECO:0000255" key="3">
    <source>
        <dbReference type="PROSITE-ProRule" id="PRU00171"/>
    </source>
</evidence>
<evidence type="ECO:0000255" key="4">
    <source>
        <dbReference type="PROSITE-ProRule" id="PRU00618"/>
    </source>
</evidence>
<evidence type="ECO:0000256" key="5">
    <source>
        <dbReference type="SAM" id="MobiDB-lite"/>
    </source>
</evidence>
<evidence type="ECO:0000269" key="6">
    <source>
    </source>
</evidence>
<evidence type="ECO:0000269" key="7">
    <source>
    </source>
</evidence>
<evidence type="ECO:0000303" key="8">
    <source>
    </source>
</evidence>
<evidence type="ECO:0000305" key="9"/>
<protein>
    <recommendedName>
        <fullName evidence="8">G protein-coupled receptor kinase 2</fullName>
        <ecNumber>2.7.11.16</ecNumber>
    </recommendedName>
</protein>
<sequence length="714" mass="80686">MELENIVANTVYLKAREGGSDSNKGKSKKWRKILQFPHISQCINLKDKLDISYGYVIDQQPIGRELFRLFCENKRPVYFRYITFLDEVVKYEIEYISNRIFIGHDIGRRFLDVEAQLELRNGSGGDALDAETQEELLLNSSNANPTETAETEHCNNTTANNCNNINNSNNSQHSSDINHKKLDTRNHNGDDATGNGSSHQDDGDESVKCQEGHDDAEKGGGGEGGGGGKCVPVGGYPDELVLDVLNDDLIAQVRNKLNSGGKDIFAQCVNAVKAFLAGEPFREFESSMYFHRYLQWKWLEAQPITYKTFRMYRVLGKGGFGEVCACQVRATGKMYACKKLEKKRIKKRKGESMVLIEKQILQKINSPFVVNLAYAYETKDALCLVLTIMNGGDLKFHIYNMGGEPGFELERARFYAAEVACGLQHLHKQGIVYRDCKPENILLDDHGHVRISDLGLAVEIPEGEMVRGRVGTVGYMAPEVIDNEKYAFSPDWFSFGCLLYEMIEGQAPFRMRKEKVKREEVDRRVKEDPEKYSSKFNDEAKSMCQQLLAKSIKQRLGCRNGRMGGQDVMAHPFFHSTQLNWRRLEAGMLEPPFVPDPHAVYAKDVLDIEQFSTVKGVNIDESDTNFYTKFNTGSVSISWQNEMMETECFRELNVFGPEECPTPDLQINAAPEPDKAGCFPFRRKKKQPARTQPIPIPEHLLTTSHSVSSTTVES</sequence>
<reference key="1">
    <citation type="journal article" date="1997" name="Development">
        <title>The Drosophila G-protein-coupled receptor kinase homologue Gprk2 is required for egg morphogenesis.</title>
        <authorList>
            <person name="Schneider L.E."/>
            <person name="Spradling A.C."/>
        </authorList>
    </citation>
    <scope>NUCLEOTIDE SEQUENCE [MRNA]</scope>
    <scope>FUNCTION</scope>
    <scope>SUBCELLULAR LOCATION</scope>
    <scope>TISSUE SPECIFICITY</scope>
    <scope>DEVELOPMENTAL STAGE</scope>
    <scope>DISRUPTION PHENOTYPE</scope>
</reference>
<reference key="2">
    <citation type="journal article" date="2000" name="Science">
        <title>The genome sequence of Drosophila melanogaster.</title>
        <authorList>
            <person name="Adams M.D."/>
            <person name="Celniker S.E."/>
            <person name="Holt R.A."/>
            <person name="Evans C.A."/>
            <person name="Gocayne J.D."/>
            <person name="Amanatides P.G."/>
            <person name="Scherer S.E."/>
            <person name="Li P.W."/>
            <person name="Hoskins R.A."/>
            <person name="Galle R.F."/>
            <person name="George R.A."/>
            <person name="Lewis S.E."/>
            <person name="Richards S."/>
            <person name="Ashburner M."/>
            <person name="Henderson S.N."/>
            <person name="Sutton G.G."/>
            <person name="Wortman J.R."/>
            <person name="Yandell M.D."/>
            <person name="Zhang Q."/>
            <person name="Chen L.X."/>
            <person name="Brandon R.C."/>
            <person name="Rogers Y.-H.C."/>
            <person name="Blazej R.G."/>
            <person name="Champe M."/>
            <person name="Pfeiffer B.D."/>
            <person name="Wan K.H."/>
            <person name="Doyle C."/>
            <person name="Baxter E.G."/>
            <person name="Helt G."/>
            <person name="Nelson C.R."/>
            <person name="Miklos G.L.G."/>
            <person name="Abril J.F."/>
            <person name="Agbayani A."/>
            <person name="An H.-J."/>
            <person name="Andrews-Pfannkoch C."/>
            <person name="Baldwin D."/>
            <person name="Ballew R.M."/>
            <person name="Basu A."/>
            <person name="Baxendale J."/>
            <person name="Bayraktaroglu L."/>
            <person name="Beasley E.M."/>
            <person name="Beeson K.Y."/>
            <person name="Benos P.V."/>
            <person name="Berman B.P."/>
            <person name="Bhandari D."/>
            <person name="Bolshakov S."/>
            <person name="Borkova D."/>
            <person name="Botchan M.R."/>
            <person name="Bouck J."/>
            <person name="Brokstein P."/>
            <person name="Brottier P."/>
            <person name="Burtis K.C."/>
            <person name="Busam D.A."/>
            <person name="Butler H."/>
            <person name="Cadieu E."/>
            <person name="Center A."/>
            <person name="Chandra I."/>
            <person name="Cherry J.M."/>
            <person name="Cawley S."/>
            <person name="Dahlke C."/>
            <person name="Davenport L.B."/>
            <person name="Davies P."/>
            <person name="de Pablos B."/>
            <person name="Delcher A."/>
            <person name="Deng Z."/>
            <person name="Mays A.D."/>
            <person name="Dew I."/>
            <person name="Dietz S.M."/>
            <person name="Dodson K."/>
            <person name="Doup L.E."/>
            <person name="Downes M."/>
            <person name="Dugan-Rocha S."/>
            <person name="Dunkov B.C."/>
            <person name="Dunn P."/>
            <person name="Durbin K.J."/>
            <person name="Evangelista C.C."/>
            <person name="Ferraz C."/>
            <person name="Ferriera S."/>
            <person name="Fleischmann W."/>
            <person name="Fosler C."/>
            <person name="Gabrielian A.E."/>
            <person name="Garg N.S."/>
            <person name="Gelbart W.M."/>
            <person name="Glasser K."/>
            <person name="Glodek A."/>
            <person name="Gong F."/>
            <person name="Gorrell J.H."/>
            <person name="Gu Z."/>
            <person name="Guan P."/>
            <person name="Harris M."/>
            <person name="Harris N.L."/>
            <person name="Harvey D.A."/>
            <person name="Heiman T.J."/>
            <person name="Hernandez J.R."/>
            <person name="Houck J."/>
            <person name="Hostin D."/>
            <person name="Houston K.A."/>
            <person name="Howland T.J."/>
            <person name="Wei M.-H."/>
            <person name="Ibegwam C."/>
            <person name="Jalali M."/>
            <person name="Kalush F."/>
            <person name="Karpen G.H."/>
            <person name="Ke Z."/>
            <person name="Kennison J.A."/>
            <person name="Ketchum K.A."/>
            <person name="Kimmel B.E."/>
            <person name="Kodira C.D."/>
            <person name="Kraft C.L."/>
            <person name="Kravitz S."/>
            <person name="Kulp D."/>
            <person name="Lai Z."/>
            <person name="Lasko P."/>
            <person name="Lei Y."/>
            <person name="Levitsky A.A."/>
            <person name="Li J.H."/>
            <person name="Li Z."/>
            <person name="Liang Y."/>
            <person name="Lin X."/>
            <person name="Liu X."/>
            <person name="Mattei B."/>
            <person name="McIntosh T.C."/>
            <person name="McLeod M.P."/>
            <person name="McPherson D."/>
            <person name="Merkulov G."/>
            <person name="Milshina N.V."/>
            <person name="Mobarry C."/>
            <person name="Morris J."/>
            <person name="Moshrefi A."/>
            <person name="Mount S.M."/>
            <person name="Moy M."/>
            <person name="Murphy B."/>
            <person name="Murphy L."/>
            <person name="Muzny D.M."/>
            <person name="Nelson D.L."/>
            <person name="Nelson D.R."/>
            <person name="Nelson K.A."/>
            <person name="Nixon K."/>
            <person name="Nusskern D.R."/>
            <person name="Pacleb J.M."/>
            <person name="Palazzolo M."/>
            <person name="Pittman G.S."/>
            <person name="Pan S."/>
            <person name="Pollard J."/>
            <person name="Puri V."/>
            <person name="Reese M.G."/>
            <person name="Reinert K."/>
            <person name="Remington K."/>
            <person name="Saunders R.D.C."/>
            <person name="Scheeler F."/>
            <person name="Shen H."/>
            <person name="Shue B.C."/>
            <person name="Siden-Kiamos I."/>
            <person name="Simpson M."/>
            <person name="Skupski M.P."/>
            <person name="Smith T.J."/>
            <person name="Spier E."/>
            <person name="Spradling A.C."/>
            <person name="Stapleton M."/>
            <person name="Strong R."/>
            <person name="Sun E."/>
            <person name="Svirskas R."/>
            <person name="Tector C."/>
            <person name="Turner R."/>
            <person name="Venter E."/>
            <person name="Wang A.H."/>
            <person name="Wang X."/>
            <person name="Wang Z.-Y."/>
            <person name="Wassarman D.A."/>
            <person name="Weinstock G.M."/>
            <person name="Weissenbach J."/>
            <person name="Williams S.M."/>
            <person name="Woodage T."/>
            <person name="Worley K.C."/>
            <person name="Wu D."/>
            <person name="Yang S."/>
            <person name="Yao Q.A."/>
            <person name="Ye J."/>
            <person name="Yeh R.-F."/>
            <person name="Zaveri J.S."/>
            <person name="Zhan M."/>
            <person name="Zhang G."/>
            <person name="Zhao Q."/>
            <person name="Zheng L."/>
            <person name="Zheng X.H."/>
            <person name="Zhong F.N."/>
            <person name="Zhong W."/>
            <person name="Zhou X."/>
            <person name="Zhu S.C."/>
            <person name="Zhu X."/>
            <person name="Smith H.O."/>
            <person name="Gibbs R.A."/>
            <person name="Myers E.W."/>
            <person name="Rubin G.M."/>
            <person name="Venter J.C."/>
        </authorList>
    </citation>
    <scope>NUCLEOTIDE SEQUENCE [LARGE SCALE GENOMIC DNA]</scope>
    <source>
        <strain>Berkeley</strain>
    </source>
</reference>
<reference key="3">
    <citation type="journal article" date="2002" name="Genome Biol.">
        <title>Annotation of the Drosophila melanogaster euchromatic genome: a systematic review.</title>
        <authorList>
            <person name="Misra S."/>
            <person name="Crosby M.A."/>
            <person name="Mungall C.J."/>
            <person name="Matthews B.B."/>
            <person name="Campbell K.S."/>
            <person name="Hradecky P."/>
            <person name="Huang Y."/>
            <person name="Kaminker J.S."/>
            <person name="Millburn G.H."/>
            <person name="Prochnik S.E."/>
            <person name="Smith C.D."/>
            <person name="Tupy J.L."/>
            <person name="Whitfield E.J."/>
            <person name="Bayraktaroglu L."/>
            <person name="Berman B.P."/>
            <person name="Bettencourt B.R."/>
            <person name="Celniker S.E."/>
            <person name="de Grey A.D.N.J."/>
            <person name="Drysdale R.A."/>
            <person name="Harris N.L."/>
            <person name="Richter J."/>
            <person name="Russo S."/>
            <person name="Schroeder A.J."/>
            <person name="Shu S.Q."/>
            <person name="Stapleton M."/>
            <person name="Yamada C."/>
            <person name="Ashburner M."/>
            <person name="Gelbart W.M."/>
            <person name="Rubin G.M."/>
            <person name="Lewis S.E."/>
        </authorList>
    </citation>
    <scope>GENOME REANNOTATION</scope>
    <source>
        <strain>Berkeley</strain>
    </source>
</reference>
<reference key="4">
    <citation type="submission" date="2007-12" db="EMBL/GenBank/DDBJ databases">
        <authorList>
            <person name="Stapleton M."/>
            <person name="Carlson J.W."/>
            <person name="Frise E."/>
            <person name="Kapadia B."/>
            <person name="Park S."/>
            <person name="Wan K.H."/>
            <person name="Yu C."/>
            <person name="Celniker S.E."/>
        </authorList>
    </citation>
    <scope>NUCLEOTIDE SEQUENCE [LARGE SCALE MRNA]</scope>
    <source>
        <strain>Berkeley</strain>
        <tissue>Embryo</tissue>
    </source>
</reference>
<reference key="5">
    <citation type="journal article" date="2002" name="Genome Biol.">
        <title>A Drosophila full-length cDNA resource.</title>
        <authorList>
            <person name="Stapleton M."/>
            <person name="Carlson J.W."/>
            <person name="Brokstein P."/>
            <person name="Yu C."/>
            <person name="Champe M."/>
            <person name="George R.A."/>
            <person name="Guarin H."/>
            <person name="Kronmiller B."/>
            <person name="Pacleb J.M."/>
            <person name="Park S."/>
            <person name="Wan K.H."/>
            <person name="Rubin G.M."/>
            <person name="Celniker S.E."/>
        </authorList>
    </citation>
    <scope>NUCLEOTIDE SEQUENCE [LARGE SCALE MRNA] OF 112-714</scope>
    <source>
        <strain>Berkeley</strain>
        <tissue>Embryo</tissue>
    </source>
</reference>
<reference key="6">
    <citation type="journal article" date="1991" name="Proc. Natl. Acad. Sci. U.S.A.">
        <title>Isolation of Drosophila genes encoding G protein-coupled receptor kinases.</title>
        <authorList>
            <person name="Cassill J.A."/>
            <person name="Whitney M."/>
            <person name="Joazeiro C.A."/>
            <person name="Becker A."/>
            <person name="Zuker C.S."/>
        </authorList>
    </citation>
    <scope>NUCLEOTIDE SEQUENCE [MRNA] OF 201-714</scope>
    <source>
        <tissue>Retina</tissue>
    </source>
</reference>
<reference key="7">
    <citation type="journal article" date="2008" name="J. Proteome Res.">
        <title>Phosphoproteome analysis of Drosophila melanogaster embryos.</title>
        <authorList>
            <person name="Zhai B."/>
            <person name="Villen J."/>
            <person name="Beausoleil S.A."/>
            <person name="Mintseris J."/>
            <person name="Gygi S.P."/>
        </authorList>
    </citation>
    <scope>PHOSPHORYLATION [LARGE SCALE ANALYSIS] AT SER-612 AND THR-613</scope>
    <scope>IDENTIFICATION BY MASS SPECTROMETRY</scope>
    <source>
        <tissue>Embryo</tissue>
    </source>
</reference>
<accession>P32866</accession>
<accession>A9UN94</accession>
<accession>Q960P0</accession>
<accession>Q9V9X6</accession>
<gene>
    <name type="primary">Gprk2</name>
    <name type="synonym">Gprk-2</name>
    <name type="ORF">CG17998</name>
</gene>
<proteinExistence type="evidence at protein level"/>
<dbReference type="EC" id="2.7.11.16"/>
<dbReference type="EMBL" id="AF004674">
    <property type="protein sequence ID" value="AAB61467.1"/>
    <property type="molecule type" value="mRNA"/>
</dbReference>
<dbReference type="EMBL" id="AE014297">
    <property type="protein sequence ID" value="AAF57152.1"/>
    <property type="molecule type" value="Genomic_DNA"/>
</dbReference>
<dbReference type="EMBL" id="BT031258">
    <property type="protein sequence ID" value="ABY20499.1"/>
    <property type="molecule type" value="mRNA"/>
</dbReference>
<dbReference type="EMBL" id="AY051949">
    <property type="protein sequence ID" value="AAK93373.1"/>
    <property type="status" value="ALT_INIT"/>
    <property type="molecule type" value="mRNA"/>
</dbReference>
<dbReference type="EMBL" id="M80494">
    <property type="protein sequence ID" value="AAA28589.1"/>
    <property type="status" value="ALT_FRAME"/>
    <property type="molecule type" value="mRNA"/>
</dbReference>
<dbReference type="PIR" id="B41615">
    <property type="entry name" value="B41615"/>
</dbReference>
<dbReference type="RefSeq" id="NP_001263143.1">
    <property type="nucleotide sequence ID" value="NM_001276214.1"/>
</dbReference>
<dbReference type="RefSeq" id="NP_476867.1">
    <property type="nucleotide sequence ID" value="NM_057519.4"/>
</dbReference>
<dbReference type="SMR" id="P32866"/>
<dbReference type="BioGRID" id="71932">
    <property type="interactions" value="16"/>
</dbReference>
<dbReference type="DIP" id="DIP-61924N"/>
<dbReference type="FunCoup" id="P32866">
    <property type="interactions" value="626"/>
</dbReference>
<dbReference type="IntAct" id="P32866">
    <property type="interactions" value="39"/>
</dbReference>
<dbReference type="STRING" id="7227.FBpp0085149"/>
<dbReference type="GlyGen" id="P32866">
    <property type="glycosylation" value="1 site"/>
</dbReference>
<dbReference type="iPTMnet" id="P32866"/>
<dbReference type="PaxDb" id="7227-FBpp0085149"/>
<dbReference type="DNASU" id="49045"/>
<dbReference type="EnsemblMetazoa" id="FBtr0085788">
    <property type="protein sequence ID" value="FBpp0085149"/>
    <property type="gene ID" value="FBgn0261988"/>
</dbReference>
<dbReference type="EnsemblMetazoa" id="FBtr0334555">
    <property type="protein sequence ID" value="FBpp0306622"/>
    <property type="gene ID" value="FBgn0261988"/>
</dbReference>
<dbReference type="GeneID" id="49045"/>
<dbReference type="KEGG" id="dme:Dmel_CG17998"/>
<dbReference type="AGR" id="FB:FBgn0261988"/>
<dbReference type="CTD" id="49045"/>
<dbReference type="FlyBase" id="FBgn0261988">
    <property type="gene designation" value="Gprk2"/>
</dbReference>
<dbReference type="VEuPathDB" id="VectorBase:FBgn0261988"/>
<dbReference type="eggNOG" id="KOG0986">
    <property type="taxonomic scope" value="Eukaryota"/>
</dbReference>
<dbReference type="GeneTree" id="ENSGT00940000167881"/>
<dbReference type="HOGENOM" id="CLU_000288_63_41_1"/>
<dbReference type="InParanoid" id="P32866"/>
<dbReference type="OMA" id="WQTEMME"/>
<dbReference type="OrthoDB" id="354826at2759"/>
<dbReference type="PhylomeDB" id="P32866"/>
<dbReference type="BRENDA" id="2.7.11.15">
    <property type="organism ID" value="1994"/>
</dbReference>
<dbReference type="Reactome" id="R-DME-418555">
    <property type="pathway name" value="G alpha (s) signalling events"/>
</dbReference>
<dbReference type="SignaLink" id="P32866"/>
<dbReference type="BioGRID-ORCS" id="49045">
    <property type="hits" value="0 hits in 3 CRISPR screens"/>
</dbReference>
<dbReference type="ChiTaRS" id="Gprk2">
    <property type="organism name" value="fly"/>
</dbReference>
<dbReference type="GenomeRNAi" id="49045"/>
<dbReference type="PRO" id="PR:P32866"/>
<dbReference type="Proteomes" id="UP000000803">
    <property type="component" value="Chromosome 3R"/>
</dbReference>
<dbReference type="Bgee" id="FBgn0261988">
    <property type="expression patterns" value="Expressed in adult brain perineurial glial cell (Drosophila) in insect head and 286 other cell types or tissues"/>
</dbReference>
<dbReference type="ExpressionAtlas" id="P32866">
    <property type="expression patterns" value="baseline and differential"/>
</dbReference>
<dbReference type="GO" id="GO:0005737">
    <property type="term" value="C:cytoplasm"/>
    <property type="evidence" value="ECO:0000314"/>
    <property type="project" value="FlyBase"/>
</dbReference>
<dbReference type="GO" id="GO:0009898">
    <property type="term" value="C:cytoplasmic side of plasma membrane"/>
    <property type="evidence" value="ECO:0000314"/>
    <property type="project" value="FlyBase"/>
</dbReference>
<dbReference type="GO" id="GO:0005886">
    <property type="term" value="C:plasma membrane"/>
    <property type="evidence" value="ECO:0000314"/>
    <property type="project" value="FlyBase"/>
</dbReference>
<dbReference type="GO" id="GO:0005524">
    <property type="term" value="F:ATP binding"/>
    <property type="evidence" value="ECO:0007669"/>
    <property type="project" value="UniProtKB-KW"/>
</dbReference>
<dbReference type="GO" id="GO:0004703">
    <property type="term" value="F:G protein-coupled receptor kinase activity"/>
    <property type="evidence" value="ECO:0000315"/>
    <property type="project" value="FlyBase"/>
</dbReference>
<dbReference type="GO" id="GO:0070273">
    <property type="term" value="F:phosphatidylinositol-4-phosphate binding"/>
    <property type="evidence" value="ECO:0000314"/>
    <property type="project" value="FlyBase"/>
</dbReference>
<dbReference type="GO" id="GO:0004672">
    <property type="term" value="F:protein kinase activity"/>
    <property type="evidence" value="ECO:0000318"/>
    <property type="project" value="GO_Central"/>
</dbReference>
<dbReference type="GO" id="GO:0004674">
    <property type="term" value="F:protein serine/threonine kinase activity"/>
    <property type="evidence" value="ECO:0000314"/>
    <property type="project" value="FlyBase"/>
</dbReference>
<dbReference type="GO" id="GO:0003384">
    <property type="term" value="P:apical constriction involved in gastrulation"/>
    <property type="evidence" value="ECO:0000315"/>
    <property type="project" value="FlyBase"/>
</dbReference>
<dbReference type="GO" id="GO:0050830">
    <property type="term" value="P:defense response to Gram-positive bacterium"/>
    <property type="evidence" value="ECO:0000315"/>
    <property type="project" value="FlyBase"/>
</dbReference>
<dbReference type="GO" id="GO:0007476">
    <property type="term" value="P:imaginal disc-derived wing morphogenesis"/>
    <property type="evidence" value="ECO:0000315"/>
    <property type="project" value="FlyBase"/>
</dbReference>
<dbReference type="GO" id="GO:0045879">
    <property type="term" value="P:negative regulation of smoothened signaling pathway"/>
    <property type="evidence" value="ECO:0000316"/>
    <property type="project" value="FlyBase"/>
</dbReference>
<dbReference type="GO" id="GO:0048601">
    <property type="term" value="P:oocyte morphogenesis"/>
    <property type="evidence" value="ECO:0000315"/>
    <property type="project" value="FlyBase"/>
</dbReference>
<dbReference type="GO" id="GO:0006963">
    <property type="term" value="P:positive regulation of antibacterial peptide biosynthetic process"/>
    <property type="evidence" value="ECO:0000315"/>
    <property type="project" value="FlyBase"/>
</dbReference>
<dbReference type="GO" id="GO:0048260">
    <property type="term" value="P:positive regulation of receptor-mediated endocytosis"/>
    <property type="evidence" value="ECO:0000315"/>
    <property type="project" value="FlyBase"/>
</dbReference>
<dbReference type="GO" id="GO:0045880">
    <property type="term" value="P:positive regulation of smoothened signaling pathway"/>
    <property type="evidence" value="ECO:0000314"/>
    <property type="project" value="FlyBase"/>
</dbReference>
<dbReference type="GO" id="GO:0045752">
    <property type="term" value="P:positive regulation of Toll signaling pathway"/>
    <property type="evidence" value="ECO:0000315"/>
    <property type="project" value="FlyBase"/>
</dbReference>
<dbReference type="GO" id="GO:0009966">
    <property type="term" value="P:regulation of signal transduction"/>
    <property type="evidence" value="ECO:0000318"/>
    <property type="project" value="GO_Central"/>
</dbReference>
<dbReference type="GO" id="GO:0007165">
    <property type="term" value="P:signal transduction"/>
    <property type="evidence" value="ECO:0007669"/>
    <property type="project" value="InterPro"/>
</dbReference>
<dbReference type="CDD" id="cd05605">
    <property type="entry name" value="STKc_GRK4_like"/>
    <property type="match status" value="1"/>
</dbReference>
<dbReference type="FunFam" id="1.10.167.10:FF:000042">
    <property type="entry name" value="G protein-coupled receptor kinase"/>
    <property type="match status" value="1"/>
</dbReference>
<dbReference type="FunFam" id="1.10.510.10:FF:000074">
    <property type="entry name" value="G protein-coupled receptor kinase"/>
    <property type="match status" value="1"/>
</dbReference>
<dbReference type="Gene3D" id="3.30.200.20">
    <property type="entry name" value="Phosphorylase Kinase, domain 1"/>
    <property type="match status" value="1"/>
</dbReference>
<dbReference type="Gene3D" id="1.10.167.10">
    <property type="entry name" value="Regulator of G-protein Signalling 4, domain 2"/>
    <property type="match status" value="2"/>
</dbReference>
<dbReference type="Gene3D" id="1.10.510.10">
    <property type="entry name" value="Transferase(Phosphotransferase) domain 1"/>
    <property type="match status" value="1"/>
</dbReference>
<dbReference type="InterPro" id="IPR000961">
    <property type="entry name" value="AGC-kinase_C"/>
</dbReference>
<dbReference type="InterPro" id="IPR000239">
    <property type="entry name" value="GPCR_kinase"/>
</dbReference>
<dbReference type="InterPro" id="IPR011009">
    <property type="entry name" value="Kinase-like_dom_sf"/>
</dbReference>
<dbReference type="InterPro" id="IPR000719">
    <property type="entry name" value="Prot_kinase_dom"/>
</dbReference>
<dbReference type="InterPro" id="IPR017441">
    <property type="entry name" value="Protein_kinase_ATP_BS"/>
</dbReference>
<dbReference type="InterPro" id="IPR016137">
    <property type="entry name" value="RGS"/>
</dbReference>
<dbReference type="InterPro" id="IPR036305">
    <property type="entry name" value="RGS_sf"/>
</dbReference>
<dbReference type="InterPro" id="IPR044926">
    <property type="entry name" value="RGS_subdomain_2"/>
</dbReference>
<dbReference type="PANTHER" id="PTHR24355:SF28">
    <property type="entry name" value="G PROTEIN-COUPLED RECEPTOR KINASE 2"/>
    <property type="match status" value="1"/>
</dbReference>
<dbReference type="PANTHER" id="PTHR24355">
    <property type="entry name" value="G PROTEIN-COUPLED RECEPTOR KINASE/RIBOSOMAL PROTEIN S6 KINASE"/>
    <property type="match status" value="1"/>
</dbReference>
<dbReference type="Pfam" id="PF00069">
    <property type="entry name" value="Pkinase"/>
    <property type="match status" value="1"/>
</dbReference>
<dbReference type="PRINTS" id="PR00717">
    <property type="entry name" value="GPCRKINASE"/>
</dbReference>
<dbReference type="SMART" id="SM00315">
    <property type="entry name" value="RGS"/>
    <property type="match status" value="1"/>
</dbReference>
<dbReference type="SMART" id="SM00133">
    <property type="entry name" value="S_TK_X"/>
    <property type="match status" value="1"/>
</dbReference>
<dbReference type="SUPFAM" id="SSF56112">
    <property type="entry name" value="Protein kinase-like (PK-like)"/>
    <property type="match status" value="1"/>
</dbReference>
<dbReference type="SUPFAM" id="SSF48097">
    <property type="entry name" value="Regulator of G-protein signaling, RGS"/>
    <property type="match status" value="1"/>
</dbReference>
<dbReference type="PROSITE" id="PS51285">
    <property type="entry name" value="AGC_KINASE_CTER"/>
    <property type="match status" value="1"/>
</dbReference>
<dbReference type="PROSITE" id="PS00107">
    <property type="entry name" value="PROTEIN_KINASE_ATP"/>
    <property type="match status" value="1"/>
</dbReference>
<dbReference type="PROSITE" id="PS50011">
    <property type="entry name" value="PROTEIN_KINASE_DOM"/>
    <property type="match status" value="1"/>
</dbReference>
<dbReference type="PROSITE" id="PS50132">
    <property type="entry name" value="RGS"/>
    <property type="match status" value="2"/>
</dbReference>